<organism>
    <name type="scientific">Lysinibacillus sphaericus (strain C3-41)</name>
    <dbReference type="NCBI Taxonomy" id="444177"/>
    <lineage>
        <taxon>Bacteria</taxon>
        <taxon>Bacillati</taxon>
        <taxon>Bacillota</taxon>
        <taxon>Bacilli</taxon>
        <taxon>Bacillales</taxon>
        <taxon>Bacillaceae</taxon>
        <taxon>Lysinibacillus</taxon>
    </lineage>
</organism>
<name>RS3_LYSSC</name>
<feature type="chain" id="PRO_1000140986" description="Small ribosomal subunit protein uS3">
    <location>
        <begin position="1"/>
        <end position="217"/>
    </location>
</feature>
<feature type="domain" description="KH type-2" evidence="1">
    <location>
        <begin position="38"/>
        <end position="106"/>
    </location>
</feature>
<sequence length="217" mass="24272">MGQKVHPIGLRVGIIRDWESKWYAEKDYATLLHEDIKVRKYIETALKDASVSKVEIERAANRVNITIHTAKPGKVIGKGGTEVENLRKYLSELTGKRVHINIIEIKRADLDARLVAENIARQLENRVSFRRAQKQAIQRTIRAGAKGIKTQVSGRLGGADIARAEHYSEGTVPLHTLRADIDYAHAEADTTYGKLGVKVWIYRGEVLPTKKSVEGGK</sequence>
<dbReference type="EMBL" id="CP000817">
    <property type="protein sequence ID" value="ACA42052.1"/>
    <property type="molecule type" value="Genomic_DNA"/>
</dbReference>
<dbReference type="RefSeq" id="WP_012296061.1">
    <property type="nucleotide sequence ID" value="NC_010382.1"/>
</dbReference>
<dbReference type="SMR" id="B1HMX4"/>
<dbReference type="EnsemblBacteria" id="ACA42052">
    <property type="protein sequence ID" value="ACA42052"/>
    <property type="gene ID" value="Bsph_4608"/>
</dbReference>
<dbReference type="KEGG" id="lsp:Bsph_4608"/>
<dbReference type="HOGENOM" id="CLU_058591_0_2_9"/>
<dbReference type="Proteomes" id="UP000002164">
    <property type="component" value="Chromosome"/>
</dbReference>
<dbReference type="GO" id="GO:0022627">
    <property type="term" value="C:cytosolic small ribosomal subunit"/>
    <property type="evidence" value="ECO:0007669"/>
    <property type="project" value="TreeGrafter"/>
</dbReference>
<dbReference type="GO" id="GO:0003729">
    <property type="term" value="F:mRNA binding"/>
    <property type="evidence" value="ECO:0007669"/>
    <property type="project" value="UniProtKB-UniRule"/>
</dbReference>
<dbReference type="GO" id="GO:0019843">
    <property type="term" value="F:rRNA binding"/>
    <property type="evidence" value="ECO:0007669"/>
    <property type="project" value="UniProtKB-UniRule"/>
</dbReference>
<dbReference type="GO" id="GO:0003735">
    <property type="term" value="F:structural constituent of ribosome"/>
    <property type="evidence" value="ECO:0007669"/>
    <property type="project" value="InterPro"/>
</dbReference>
<dbReference type="GO" id="GO:0006412">
    <property type="term" value="P:translation"/>
    <property type="evidence" value="ECO:0007669"/>
    <property type="project" value="UniProtKB-UniRule"/>
</dbReference>
<dbReference type="CDD" id="cd02412">
    <property type="entry name" value="KH-II_30S_S3"/>
    <property type="match status" value="1"/>
</dbReference>
<dbReference type="FunFam" id="3.30.1140.32:FF:000001">
    <property type="entry name" value="30S ribosomal protein S3"/>
    <property type="match status" value="1"/>
</dbReference>
<dbReference type="FunFam" id="3.30.300.20:FF:000001">
    <property type="entry name" value="30S ribosomal protein S3"/>
    <property type="match status" value="1"/>
</dbReference>
<dbReference type="Gene3D" id="3.30.300.20">
    <property type="match status" value="1"/>
</dbReference>
<dbReference type="Gene3D" id="3.30.1140.32">
    <property type="entry name" value="Ribosomal protein S3, C-terminal domain"/>
    <property type="match status" value="1"/>
</dbReference>
<dbReference type="HAMAP" id="MF_01309_B">
    <property type="entry name" value="Ribosomal_uS3_B"/>
    <property type="match status" value="1"/>
</dbReference>
<dbReference type="InterPro" id="IPR004087">
    <property type="entry name" value="KH_dom"/>
</dbReference>
<dbReference type="InterPro" id="IPR015946">
    <property type="entry name" value="KH_dom-like_a/b"/>
</dbReference>
<dbReference type="InterPro" id="IPR004044">
    <property type="entry name" value="KH_dom_type_2"/>
</dbReference>
<dbReference type="InterPro" id="IPR009019">
    <property type="entry name" value="KH_sf_prok-type"/>
</dbReference>
<dbReference type="InterPro" id="IPR036419">
    <property type="entry name" value="Ribosomal_S3_C_sf"/>
</dbReference>
<dbReference type="InterPro" id="IPR005704">
    <property type="entry name" value="Ribosomal_uS3_bac-typ"/>
</dbReference>
<dbReference type="InterPro" id="IPR001351">
    <property type="entry name" value="Ribosomal_uS3_C"/>
</dbReference>
<dbReference type="InterPro" id="IPR018280">
    <property type="entry name" value="Ribosomal_uS3_CS"/>
</dbReference>
<dbReference type="NCBIfam" id="TIGR01009">
    <property type="entry name" value="rpsC_bact"/>
    <property type="match status" value="1"/>
</dbReference>
<dbReference type="PANTHER" id="PTHR11760">
    <property type="entry name" value="30S/40S RIBOSOMAL PROTEIN S3"/>
    <property type="match status" value="1"/>
</dbReference>
<dbReference type="PANTHER" id="PTHR11760:SF19">
    <property type="entry name" value="SMALL RIBOSOMAL SUBUNIT PROTEIN US3C"/>
    <property type="match status" value="1"/>
</dbReference>
<dbReference type="Pfam" id="PF07650">
    <property type="entry name" value="KH_2"/>
    <property type="match status" value="1"/>
</dbReference>
<dbReference type="Pfam" id="PF00189">
    <property type="entry name" value="Ribosomal_S3_C"/>
    <property type="match status" value="1"/>
</dbReference>
<dbReference type="SMART" id="SM00322">
    <property type="entry name" value="KH"/>
    <property type="match status" value="1"/>
</dbReference>
<dbReference type="SUPFAM" id="SSF54814">
    <property type="entry name" value="Prokaryotic type KH domain (KH-domain type II)"/>
    <property type="match status" value="1"/>
</dbReference>
<dbReference type="SUPFAM" id="SSF54821">
    <property type="entry name" value="Ribosomal protein S3 C-terminal domain"/>
    <property type="match status" value="1"/>
</dbReference>
<dbReference type="PROSITE" id="PS50823">
    <property type="entry name" value="KH_TYPE_2"/>
    <property type="match status" value="1"/>
</dbReference>
<dbReference type="PROSITE" id="PS00548">
    <property type="entry name" value="RIBOSOMAL_S3"/>
    <property type="match status" value="1"/>
</dbReference>
<accession>B1HMX4</accession>
<reference key="1">
    <citation type="journal article" date="2008" name="J. Bacteriol.">
        <title>Complete genome sequence of the mosquitocidal bacterium Bacillus sphaericus C3-41 and comparison with those of closely related Bacillus species.</title>
        <authorList>
            <person name="Hu X."/>
            <person name="Fan W."/>
            <person name="Han B."/>
            <person name="Liu H."/>
            <person name="Zheng D."/>
            <person name="Li Q."/>
            <person name="Dong W."/>
            <person name="Yan J."/>
            <person name="Gao M."/>
            <person name="Berry C."/>
            <person name="Yuan Z."/>
        </authorList>
    </citation>
    <scope>NUCLEOTIDE SEQUENCE [LARGE SCALE GENOMIC DNA]</scope>
    <source>
        <strain>C3-41</strain>
    </source>
</reference>
<proteinExistence type="inferred from homology"/>
<keyword id="KW-0687">Ribonucleoprotein</keyword>
<keyword id="KW-0689">Ribosomal protein</keyword>
<keyword id="KW-0694">RNA-binding</keyword>
<keyword id="KW-0699">rRNA-binding</keyword>
<comment type="function">
    <text evidence="1">Binds the lower part of the 30S subunit head. Binds mRNA in the 70S ribosome, positioning it for translation.</text>
</comment>
<comment type="subunit">
    <text evidence="1">Part of the 30S ribosomal subunit. Forms a tight complex with proteins S10 and S14.</text>
</comment>
<comment type="similarity">
    <text evidence="1">Belongs to the universal ribosomal protein uS3 family.</text>
</comment>
<protein>
    <recommendedName>
        <fullName evidence="1">Small ribosomal subunit protein uS3</fullName>
    </recommendedName>
    <alternativeName>
        <fullName evidence="2">30S ribosomal protein S3</fullName>
    </alternativeName>
</protein>
<evidence type="ECO:0000255" key="1">
    <source>
        <dbReference type="HAMAP-Rule" id="MF_01309"/>
    </source>
</evidence>
<evidence type="ECO:0000305" key="2"/>
<gene>
    <name evidence="1" type="primary">rpsC</name>
    <name type="ordered locus">Bsph_4608</name>
</gene>